<organism>
    <name type="scientific">Mycobacterium tuberculosis (strain ATCC 25618 / H37Rv)</name>
    <dbReference type="NCBI Taxonomy" id="83332"/>
    <lineage>
        <taxon>Bacteria</taxon>
        <taxon>Bacillati</taxon>
        <taxon>Actinomycetota</taxon>
        <taxon>Actinomycetes</taxon>
        <taxon>Mycobacteriales</taxon>
        <taxon>Mycobacteriaceae</taxon>
        <taxon>Mycobacterium</taxon>
        <taxon>Mycobacterium tuberculosis complex</taxon>
    </lineage>
</organism>
<proteinExistence type="evidence at protein level"/>
<feature type="chain" id="PRO_0000448604" description="Probable mycobacterial cidal antitoxin Rv3188">
    <location>
        <begin position="1"/>
        <end position="115"/>
    </location>
</feature>
<reference key="1">
    <citation type="journal article" date="1998" name="Nature">
        <title>Deciphering the biology of Mycobacterium tuberculosis from the complete genome sequence.</title>
        <authorList>
            <person name="Cole S.T."/>
            <person name="Brosch R."/>
            <person name="Parkhill J."/>
            <person name="Garnier T."/>
            <person name="Churcher C.M."/>
            <person name="Harris D.E."/>
            <person name="Gordon S.V."/>
            <person name="Eiglmeier K."/>
            <person name="Gas S."/>
            <person name="Barry C.E. III"/>
            <person name="Tekaia F."/>
            <person name="Badcock K."/>
            <person name="Basham D."/>
            <person name="Brown D."/>
            <person name="Chillingworth T."/>
            <person name="Connor R."/>
            <person name="Davies R.M."/>
            <person name="Devlin K."/>
            <person name="Feltwell T."/>
            <person name="Gentles S."/>
            <person name="Hamlin N."/>
            <person name="Holroyd S."/>
            <person name="Hornsby T."/>
            <person name="Jagels K."/>
            <person name="Krogh A."/>
            <person name="McLean J."/>
            <person name="Moule S."/>
            <person name="Murphy L.D."/>
            <person name="Oliver S."/>
            <person name="Osborne J."/>
            <person name="Quail M.A."/>
            <person name="Rajandream M.A."/>
            <person name="Rogers J."/>
            <person name="Rutter S."/>
            <person name="Seeger K."/>
            <person name="Skelton S."/>
            <person name="Squares S."/>
            <person name="Squares R."/>
            <person name="Sulston J.E."/>
            <person name="Taylor K."/>
            <person name="Whitehead S."/>
            <person name="Barrell B.G."/>
        </authorList>
    </citation>
    <scope>NUCLEOTIDE SEQUENCE [LARGE SCALE GENOMIC DNA]</scope>
    <source>
        <strain>ATCC 25618 / H37Rv</strain>
    </source>
</reference>
<reference evidence="5" key="2">
    <citation type="journal article" date="2011" name="Mol. Cell. Proteomics">
        <title>Proteogenomic analysis of Mycobacterium tuberculosis by high resolution mass spectrometry.</title>
        <authorList>
            <person name="Kelkar D.S."/>
            <person name="Kumar D."/>
            <person name="Kumar P."/>
            <person name="Balakrishnan L."/>
            <person name="Muthusamy B."/>
            <person name="Yadav A.K."/>
            <person name="Shrivastava P."/>
            <person name="Marimuthu A."/>
            <person name="Anand S."/>
            <person name="Sundaram H."/>
            <person name="Kingsbury R."/>
            <person name="Harsha H.C."/>
            <person name="Nair B."/>
            <person name="Prasad T.S."/>
            <person name="Chauhan D.S."/>
            <person name="Katoch K."/>
            <person name="Katoch V.M."/>
            <person name="Kumar P."/>
            <person name="Chaerkady R."/>
            <person name="Ramachandran S."/>
            <person name="Dash D."/>
            <person name="Pandey A."/>
        </authorList>
    </citation>
    <scope>IDENTIFICATION BY MASS SPECTROMETRY [LARGE SCALE ANALYSIS]</scope>
</reference>
<reference key="3">
    <citation type="journal article" date="2019" name="Proc. Natl. Acad. Sci. U.S.A.">
        <title>ParST is a widespread toxin-antitoxin module that targets nucleotide metabolism.</title>
        <authorList>
            <person name="Piscotta F.J."/>
            <person name="Jeffrey P.D."/>
            <person name="Link A.J."/>
        </authorList>
    </citation>
    <scope>DISCUSSION OF POSSIBLE FUNCTION</scope>
    <source>
        <strain>H37Rv</strain>
    </source>
</reference>
<sequence>MAVTLDRAVEASEIVDALKPFGVTQVDVAAVIQVSDRAVRGWRTGDIRPERYDRLAQLRDLVLLLSDSLTPRGVGQWLHAKNRLLDGQRPVDLLAKDRYEDVRSAAESFIDGAYV</sequence>
<keyword id="KW-1185">Reference proteome</keyword>
<keyword id="KW-1277">Toxin-antitoxin system</keyword>
<accession>O53334</accession>
<accession>F2GJP3</accession>
<accession>I6X6L9</accession>
<accession>Q7D5Z2</accession>
<comment type="function">
    <text evidence="1 4">Probable antitoxin component of a type II toxin-antitoxin (TA) system. Neutralizes the activity of cognate toxin Rv3189 by blocking access to the toxin active site.</text>
</comment>
<comment type="subunit">
    <text evidence="2">Forms a heterotetramer with cognate toxin Rv3189.</text>
</comment>
<comment type="similarity">
    <text evidence="3">Belongs to the MbcA/ParS/Xre antitoxin family.</text>
</comment>
<dbReference type="EMBL" id="AL123456">
    <property type="protein sequence ID" value="CCP45999.1"/>
    <property type="molecule type" value="Genomic_DNA"/>
</dbReference>
<dbReference type="RefSeq" id="NP_217704.1">
    <property type="nucleotide sequence ID" value="NC_000962.3"/>
</dbReference>
<dbReference type="RefSeq" id="WP_003899956.1">
    <property type="nucleotide sequence ID" value="NZ_NVQJ01000003.1"/>
</dbReference>
<dbReference type="SMR" id="O53334"/>
<dbReference type="STRING" id="83332.Rv3188"/>
<dbReference type="PaxDb" id="83332-Rv3188"/>
<dbReference type="DNASU" id="888103"/>
<dbReference type="GeneID" id="888103"/>
<dbReference type="KEGG" id="mtu:Rv3188"/>
<dbReference type="KEGG" id="mtv:RVBD_3188"/>
<dbReference type="PATRIC" id="fig|83332.111.peg.3552"/>
<dbReference type="TubercuList" id="Rv3188"/>
<dbReference type="eggNOG" id="ENOG5030YRK">
    <property type="taxonomic scope" value="Bacteria"/>
</dbReference>
<dbReference type="InParanoid" id="O53334"/>
<dbReference type="OrthoDB" id="4731912at2"/>
<dbReference type="PhylomeDB" id="O53334"/>
<dbReference type="Proteomes" id="UP000001584">
    <property type="component" value="Chromosome"/>
</dbReference>
<evidence type="ECO:0000250" key="1">
    <source>
        <dbReference type="UniProtKB" id="P9WLP7"/>
    </source>
</evidence>
<evidence type="ECO:0000250" key="2">
    <source>
        <dbReference type="UniProtKB" id="P9WLP9"/>
    </source>
</evidence>
<evidence type="ECO:0000305" key="3"/>
<evidence type="ECO:0000305" key="4">
    <source>
    </source>
</evidence>
<evidence type="ECO:0007744" key="5">
    <source>
    </source>
</evidence>
<gene>
    <name type="ordered locus">Rv3188</name>
</gene>
<name>Y3188_MYCTU</name>
<protein>
    <recommendedName>
        <fullName evidence="1">Probable mycobacterial cidal antitoxin Rv3188</fullName>
    </recommendedName>
</protein>